<organismHost>
    <name type="scientific">Connochaetes taurinus</name>
    <name type="common">Blue wildebeest</name>
    <dbReference type="NCBI Taxonomy" id="9927"/>
</organismHost>
<dbReference type="EMBL" id="AF005370">
    <property type="protein sequence ID" value="AAC58077.1"/>
    <property type="molecule type" value="Genomic_DNA"/>
</dbReference>
<dbReference type="PIR" id="T03125">
    <property type="entry name" value="T03125"/>
</dbReference>
<dbReference type="RefSeq" id="NP_065529.1">
    <property type="nucleotide sequence ID" value="NC_002531.1"/>
</dbReference>
<dbReference type="KEGG" id="vg:911794"/>
<dbReference type="Proteomes" id="UP000000941">
    <property type="component" value="Segment"/>
</dbReference>
<dbReference type="InterPro" id="IPR004289">
    <property type="entry name" value="Herpes_UL92"/>
</dbReference>
<dbReference type="Pfam" id="PF03048">
    <property type="entry name" value="Herpes_UL92"/>
    <property type="match status" value="1"/>
</dbReference>
<reference key="1">
    <citation type="journal article" date="1997" name="J. Virol.">
        <title>Primary structure of the alcelaphine herpesvirus 1 genome.</title>
        <authorList>
            <person name="Ensser A."/>
            <person name="Pflanz R."/>
            <person name="Fleckenstein B."/>
        </authorList>
    </citation>
    <scope>NUCLEOTIDE SEQUENCE [LARGE SCALE GENOMIC DNA]</scope>
</reference>
<evidence type="ECO:0000305" key="1"/>
<sequence>MFERGDQGSMHQKRRGPGAHQCYFTKMITMATTFHTVDNIFVCTECKTYHVCDGGEDCYLVNMGEGLVCELTGRCAVNSVSFGNPRPMSPVIYPHHNTPGPNQFLDSVVQCVQRDVAIYLSSSSYEEVKDKVLLCQGELREEVADLIKTTFNHCQNIFQSAQCAYSLICSIYIHVIISVYSSKTVYGNLIFKCTKNKKFDSVAKSIRQAWMSILTTGDTFTTAVM</sequence>
<proteinExistence type="inferred from homology"/>
<feature type="chain" id="PRO_0000405744" description="Gene 31 protein">
    <location>
        <begin position="1"/>
        <end position="225"/>
    </location>
</feature>
<protein>
    <recommendedName>
        <fullName>Gene 31 protein</fullName>
    </recommendedName>
</protein>
<name>UL92_ALHV1</name>
<organism>
    <name type="scientific">Alcelaphine herpesvirus 1 (strain C500)</name>
    <name type="common">AlHV-1</name>
    <name type="synonym">Malignant catarrhal fever virus</name>
    <dbReference type="NCBI Taxonomy" id="654901"/>
    <lineage>
        <taxon>Viruses</taxon>
        <taxon>Duplodnaviria</taxon>
        <taxon>Heunggongvirae</taxon>
        <taxon>Peploviricota</taxon>
        <taxon>Herviviricetes</taxon>
        <taxon>Herpesvirales</taxon>
        <taxon>Orthoherpesviridae</taxon>
        <taxon>Gammaherpesvirinae</taxon>
        <taxon>Macavirus</taxon>
        <taxon>Macavirus alcelaphinegamma1</taxon>
    </lineage>
</organism>
<comment type="similarity">
    <text evidence="1">Belongs to the herpesviridae UL92 family.</text>
</comment>
<accession>O36380</accession>
<keyword id="KW-1185">Reference proteome</keyword>
<gene>
    <name type="primary">31</name>
</gene>